<protein>
    <recommendedName>
        <fullName>Epsin-1</fullName>
    </recommendedName>
</protein>
<dbReference type="EMBL" id="Z74210">
    <property type="protein sequence ID" value="CAA98736.1"/>
    <property type="molecule type" value="Genomic_DNA"/>
</dbReference>
<dbReference type="EMBL" id="Z67750">
    <property type="protein sequence ID" value="CAA91585.1"/>
    <property type="molecule type" value="Genomic_DNA"/>
</dbReference>
<dbReference type="EMBL" id="BK006938">
    <property type="protein sequence ID" value="DAA11698.1"/>
    <property type="molecule type" value="Genomic_DNA"/>
</dbReference>
<dbReference type="PIR" id="S61052">
    <property type="entry name" value="S61052"/>
</dbReference>
<dbReference type="RefSeq" id="NP_010120.1">
    <property type="nucleotide sequence ID" value="NM_001180221.1"/>
</dbReference>
<dbReference type="PDB" id="5AHV">
    <property type="method" value="EM"/>
    <property type="resolution" value="13.60 A"/>
    <property type="chains" value="E=1-154"/>
</dbReference>
<dbReference type="PDB" id="5LOZ">
    <property type="method" value="X-ray"/>
    <property type="resolution" value="1.95 A"/>
    <property type="chains" value="A=17-150"/>
</dbReference>
<dbReference type="PDB" id="5ONF">
    <property type="method" value="X-ray"/>
    <property type="resolution" value="2.80 A"/>
    <property type="chains" value="A/B/C=1-154"/>
</dbReference>
<dbReference type="PDB" id="7B2L">
    <property type="method" value="EM"/>
    <property type="resolution" value="3.90 A"/>
    <property type="chains" value="A/C/F/H/K/M/P/R=1-157"/>
</dbReference>
<dbReference type="PDB" id="9EYT">
    <property type="method" value="X-ray"/>
    <property type="resolution" value="1.74 A"/>
    <property type="chains" value="E/G/M=448-454"/>
</dbReference>
<dbReference type="PDBsum" id="5AHV"/>
<dbReference type="PDBsum" id="5LOZ"/>
<dbReference type="PDBsum" id="5ONF"/>
<dbReference type="PDBsum" id="7B2L"/>
<dbReference type="PDBsum" id="9EYT"/>
<dbReference type="EMDB" id="EMD-11987"/>
<dbReference type="EMDB" id="EMD-2896"/>
<dbReference type="EMDB" id="EMD-2897"/>
<dbReference type="SMR" id="Q12518"/>
<dbReference type="BioGRID" id="31902">
    <property type="interactions" value="201"/>
</dbReference>
<dbReference type="DIP" id="DIP-957N"/>
<dbReference type="ELM" id="Q12518"/>
<dbReference type="FunCoup" id="Q12518">
    <property type="interactions" value="131"/>
</dbReference>
<dbReference type="IntAct" id="Q12518">
    <property type="interactions" value="25"/>
</dbReference>
<dbReference type="MINT" id="Q12518"/>
<dbReference type="STRING" id="4932.YDL161W"/>
<dbReference type="iPTMnet" id="Q12518"/>
<dbReference type="PaxDb" id="4932-YDL161W"/>
<dbReference type="PeptideAtlas" id="Q12518"/>
<dbReference type="EnsemblFungi" id="YDL161W_mRNA">
    <property type="protein sequence ID" value="YDL161W"/>
    <property type="gene ID" value="YDL161W"/>
</dbReference>
<dbReference type="GeneID" id="851392"/>
<dbReference type="KEGG" id="sce:YDL161W"/>
<dbReference type="AGR" id="SGD:S000002320"/>
<dbReference type="SGD" id="S000002320">
    <property type="gene designation" value="ENT1"/>
</dbReference>
<dbReference type="VEuPathDB" id="FungiDB:YDL161W"/>
<dbReference type="eggNOG" id="KOG2056">
    <property type="taxonomic scope" value="Eukaryota"/>
</dbReference>
<dbReference type="GeneTree" id="ENSGT00940000173221"/>
<dbReference type="HOGENOM" id="CLU_012678_0_0_1"/>
<dbReference type="InParanoid" id="Q12518"/>
<dbReference type="OMA" id="QQAQMTG"/>
<dbReference type="OrthoDB" id="4033880at2759"/>
<dbReference type="BioCyc" id="YEAST:G3O-29555-MONOMER"/>
<dbReference type="Reactome" id="R-SCE-8856825">
    <property type="pathway name" value="Cargo recognition for clathrin-mediated endocytosis"/>
</dbReference>
<dbReference type="BioGRID-ORCS" id="851392">
    <property type="hits" value="8 hits in 10 CRISPR screens"/>
</dbReference>
<dbReference type="CD-CODE" id="18F6A7CA">
    <property type="entry name" value="Endocytic condensates"/>
</dbReference>
<dbReference type="CD-CODE" id="E019EF73">
    <property type="entry name" value="Ede1 condensate"/>
</dbReference>
<dbReference type="EvolutionaryTrace" id="Q12518"/>
<dbReference type="PRO" id="PR:Q12518"/>
<dbReference type="Proteomes" id="UP000002311">
    <property type="component" value="Chromosome IV"/>
</dbReference>
<dbReference type="RNAct" id="Q12518">
    <property type="molecule type" value="protein"/>
</dbReference>
<dbReference type="GO" id="GO:0005935">
    <property type="term" value="C:cellular bud neck"/>
    <property type="evidence" value="ECO:0007005"/>
    <property type="project" value="SGD"/>
</dbReference>
<dbReference type="GO" id="GO:0005934">
    <property type="term" value="C:cellular bud tip"/>
    <property type="evidence" value="ECO:0007005"/>
    <property type="project" value="SGD"/>
</dbReference>
<dbReference type="GO" id="GO:0030125">
    <property type="term" value="C:clathrin vesicle coat"/>
    <property type="evidence" value="ECO:0000318"/>
    <property type="project" value="GO_Central"/>
</dbReference>
<dbReference type="GO" id="GO:0005737">
    <property type="term" value="C:cytoplasm"/>
    <property type="evidence" value="ECO:0007005"/>
    <property type="project" value="SGD"/>
</dbReference>
<dbReference type="GO" id="GO:0005769">
    <property type="term" value="C:early endosome"/>
    <property type="evidence" value="ECO:0000314"/>
    <property type="project" value="SGD"/>
</dbReference>
<dbReference type="GO" id="GO:0005768">
    <property type="term" value="C:endosome"/>
    <property type="evidence" value="ECO:0000318"/>
    <property type="project" value="GO_Central"/>
</dbReference>
<dbReference type="GO" id="GO:0043332">
    <property type="term" value="C:mating projection tip"/>
    <property type="evidence" value="ECO:0007005"/>
    <property type="project" value="SGD"/>
</dbReference>
<dbReference type="GO" id="GO:0005886">
    <property type="term" value="C:plasma membrane"/>
    <property type="evidence" value="ECO:0000315"/>
    <property type="project" value="SGD"/>
</dbReference>
<dbReference type="GO" id="GO:0030276">
    <property type="term" value="F:clathrin binding"/>
    <property type="evidence" value="ECO:0000314"/>
    <property type="project" value="SGD"/>
</dbReference>
<dbReference type="GO" id="GO:0070530">
    <property type="term" value="F:K63-linked polyubiquitin modification-dependent protein binding"/>
    <property type="evidence" value="ECO:0000314"/>
    <property type="project" value="SGD"/>
</dbReference>
<dbReference type="GO" id="GO:0005543">
    <property type="term" value="F:phospholipid binding"/>
    <property type="evidence" value="ECO:0000318"/>
    <property type="project" value="GO_Central"/>
</dbReference>
<dbReference type="GO" id="GO:0043130">
    <property type="term" value="F:ubiquitin binding"/>
    <property type="evidence" value="ECO:0000314"/>
    <property type="project" value="SGD"/>
</dbReference>
<dbReference type="GO" id="GO:0000147">
    <property type="term" value="P:actin cortical patch assembly"/>
    <property type="evidence" value="ECO:0000315"/>
    <property type="project" value="SGD"/>
</dbReference>
<dbReference type="GO" id="GO:0007015">
    <property type="term" value="P:actin filament organization"/>
    <property type="evidence" value="ECO:0000315"/>
    <property type="project" value="SGD"/>
</dbReference>
<dbReference type="GO" id="GO:0006897">
    <property type="term" value="P:endocytosis"/>
    <property type="evidence" value="ECO:0000315"/>
    <property type="project" value="SGD"/>
</dbReference>
<dbReference type="CDD" id="cd16991">
    <property type="entry name" value="ENTH_Ent1_Ent2"/>
    <property type="match status" value="1"/>
</dbReference>
<dbReference type="FunFam" id="1.25.40.90:FF:000010">
    <property type="entry name" value="EH domain binding protein"/>
    <property type="match status" value="1"/>
</dbReference>
<dbReference type="Gene3D" id="1.25.40.90">
    <property type="match status" value="1"/>
</dbReference>
<dbReference type="InterPro" id="IPR013809">
    <property type="entry name" value="ENTH"/>
</dbReference>
<dbReference type="InterPro" id="IPR008942">
    <property type="entry name" value="ENTH_VHS"/>
</dbReference>
<dbReference type="InterPro" id="IPR003903">
    <property type="entry name" value="UIM_dom"/>
</dbReference>
<dbReference type="PANTHER" id="PTHR12276:SF110">
    <property type="entry name" value="EPSIN-1-RELATED"/>
    <property type="match status" value="1"/>
</dbReference>
<dbReference type="PANTHER" id="PTHR12276">
    <property type="entry name" value="EPSIN/ENT-RELATED"/>
    <property type="match status" value="1"/>
</dbReference>
<dbReference type="Pfam" id="PF01417">
    <property type="entry name" value="ENTH"/>
    <property type="match status" value="1"/>
</dbReference>
<dbReference type="SMART" id="SM00273">
    <property type="entry name" value="ENTH"/>
    <property type="match status" value="1"/>
</dbReference>
<dbReference type="SMART" id="SM00726">
    <property type="entry name" value="UIM"/>
    <property type="match status" value="2"/>
</dbReference>
<dbReference type="SUPFAM" id="SSF48464">
    <property type="entry name" value="ENTH/VHS domain"/>
    <property type="match status" value="1"/>
</dbReference>
<dbReference type="PROSITE" id="PS50942">
    <property type="entry name" value="ENTH"/>
    <property type="match status" value="1"/>
</dbReference>
<dbReference type="PROSITE" id="PS50330">
    <property type="entry name" value="UIM"/>
    <property type="match status" value="2"/>
</dbReference>
<reference key="1">
    <citation type="journal article" date="1997" name="Nature">
        <title>The nucleotide sequence of Saccharomyces cerevisiae chromosome IV.</title>
        <authorList>
            <person name="Jacq C."/>
            <person name="Alt-Moerbe J."/>
            <person name="Andre B."/>
            <person name="Arnold W."/>
            <person name="Bahr A."/>
            <person name="Ballesta J.P.G."/>
            <person name="Bargues M."/>
            <person name="Baron L."/>
            <person name="Becker A."/>
            <person name="Biteau N."/>
            <person name="Bloecker H."/>
            <person name="Blugeon C."/>
            <person name="Boskovic J."/>
            <person name="Brandt P."/>
            <person name="Brueckner M."/>
            <person name="Buitrago M.J."/>
            <person name="Coster F."/>
            <person name="Delaveau T."/>
            <person name="del Rey F."/>
            <person name="Dujon B."/>
            <person name="Eide L.G."/>
            <person name="Garcia-Cantalejo J.M."/>
            <person name="Goffeau A."/>
            <person name="Gomez-Peris A."/>
            <person name="Granotier C."/>
            <person name="Hanemann V."/>
            <person name="Hankeln T."/>
            <person name="Hoheisel J.D."/>
            <person name="Jaeger W."/>
            <person name="Jimenez A."/>
            <person name="Jonniaux J.-L."/>
            <person name="Kraemer C."/>
            <person name="Kuester H."/>
            <person name="Laamanen P."/>
            <person name="Legros Y."/>
            <person name="Louis E.J."/>
            <person name="Moeller-Rieker S."/>
            <person name="Monnet A."/>
            <person name="Moro M."/>
            <person name="Mueller-Auer S."/>
            <person name="Nussbaumer B."/>
            <person name="Paricio N."/>
            <person name="Paulin L."/>
            <person name="Perea J."/>
            <person name="Perez-Alonso M."/>
            <person name="Perez-Ortin J.E."/>
            <person name="Pohl T.M."/>
            <person name="Prydz H."/>
            <person name="Purnelle B."/>
            <person name="Rasmussen S.W."/>
            <person name="Remacha M.A."/>
            <person name="Revuelta J.L."/>
            <person name="Rieger M."/>
            <person name="Salom D."/>
            <person name="Saluz H.P."/>
            <person name="Saiz J.E."/>
            <person name="Saren A.-M."/>
            <person name="Schaefer M."/>
            <person name="Scharfe M."/>
            <person name="Schmidt E.R."/>
            <person name="Schneider C."/>
            <person name="Scholler P."/>
            <person name="Schwarz S."/>
            <person name="Soler-Mira A."/>
            <person name="Urrestarazu L.A."/>
            <person name="Verhasselt P."/>
            <person name="Vissers S."/>
            <person name="Voet M."/>
            <person name="Volckaert G."/>
            <person name="Wagner G."/>
            <person name="Wambutt R."/>
            <person name="Wedler E."/>
            <person name="Wedler H."/>
            <person name="Woelfl S."/>
            <person name="Harris D.E."/>
            <person name="Bowman S."/>
            <person name="Brown D."/>
            <person name="Churcher C.M."/>
            <person name="Connor R."/>
            <person name="Dedman K."/>
            <person name="Gentles S."/>
            <person name="Hamlin N."/>
            <person name="Hunt S."/>
            <person name="Jones L."/>
            <person name="McDonald S."/>
            <person name="Murphy L.D."/>
            <person name="Niblett D."/>
            <person name="Odell C."/>
            <person name="Oliver K."/>
            <person name="Rajandream M.A."/>
            <person name="Richards C."/>
            <person name="Shore L."/>
            <person name="Walsh S.V."/>
            <person name="Barrell B.G."/>
            <person name="Dietrich F.S."/>
            <person name="Mulligan J.T."/>
            <person name="Allen E."/>
            <person name="Araujo R."/>
            <person name="Aviles E."/>
            <person name="Berno A."/>
            <person name="Carpenter J."/>
            <person name="Chen E."/>
            <person name="Cherry J.M."/>
            <person name="Chung E."/>
            <person name="Duncan M."/>
            <person name="Hunicke-Smith S."/>
            <person name="Hyman R.W."/>
            <person name="Komp C."/>
            <person name="Lashkari D."/>
            <person name="Lew H."/>
            <person name="Lin D."/>
            <person name="Mosedale D."/>
            <person name="Nakahara K."/>
            <person name="Namath A."/>
            <person name="Oefner P."/>
            <person name="Oh C."/>
            <person name="Petel F.X."/>
            <person name="Roberts D."/>
            <person name="Schramm S."/>
            <person name="Schroeder M."/>
            <person name="Shogren T."/>
            <person name="Shroff N."/>
            <person name="Winant A."/>
            <person name="Yelton M.A."/>
            <person name="Botstein D."/>
            <person name="Davis R.W."/>
            <person name="Johnston M."/>
            <person name="Andrews S."/>
            <person name="Brinkman R."/>
            <person name="Cooper J."/>
            <person name="Ding H."/>
            <person name="Du Z."/>
            <person name="Favello A."/>
            <person name="Fulton L."/>
            <person name="Gattung S."/>
            <person name="Greco T."/>
            <person name="Hallsworth K."/>
            <person name="Hawkins J."/>
            <person name="Hillier L.W."/>
            <person name="Jier M."/>
            <person name="Johnson D."/>
            <person name="Johnston L."/>
            <person name="Kirsten J."/>
            <person name="Kucaba T."/>
            <person name="Langston Y."/>
            <person name="Latreille P."/>
            <person name="Le T."/>
            <person name="Mardis E."/>
            <person name="Menezes S."/>
            <person name="Miller N."/>
            <person name="Nhan M."/>
            <person name="Pauley A."/>
            <person name="Peluso D."/>
            <person name="Rifkin L."/>
            <person name="Riles L."/>
            <person name="Taich A."/>
            <person name="Trevaskis E."/>
            <person name="Vignati D."/>
            <person name="Wilcox L."/>
            <person name="Wohldman P."/>
            <person name="Vaudin M."/>
            <person name="Wilson R."/>
            <person name="Waterston R."/>
            <person name="Albermann K."/>
            <person name="Hani J."/>
            <person name="Heumann K."/>
            <person name="Kleine K."/>
            <person name="Mewes H.-W."/>
            <person name="Zollner A."/>
            <person name="Zaccaria P."/>
        </authorList>
    </citation>
    <scope>NUCLEOTIDE SEQUENCE [LARGE SCALE GENOMIC DNA]</scope>
    <source>
        <strain>ATCC 204508 / S288c</strain>
    </source>
</reference>
<reference key="2">
    <citation type="journal article" date="2014" name="G3 (Bethesda)">
        <title>The reference genome sequence of Saccharomyces cerevisiae: Then and now.</title>
        <authorList>
            <person name="Engel S.R."/>
            <person name="Dietrich F.S."/>
            <person name="Fisk D.G."/>
            <person name="Binkley G."/>
            <person name="Balakrishnan R."/>
            <person name="Costanzo M.C."/>
            <person name="Dwight S.S."/>
            <person name="Hitz B.C."/>
            <person name="Karra K."/>
            <person name="Nash R.S."/>
            <person name="Weng S."/>
            <person name="Wong E.D."/>
            <person name="Lloyd P."/>
            <person name="Skrzypek M.S."/>
            <person name="Miyasato S.R."/>
            <person name="Simison M."/>
            <person name="Cherry J.M."/>
        </authorList>
    </citation>
    <scope>GENOME REANNOTATION</scope>
    <source>
        <strain>ATCC 204508 / S288c</strain>
    </source>
</reference>
<reference key="3">
    <citation type="journal article" date="1999" name="EMBO J.">
        <title>Yeast epsins contain an essential N-terminal ENTH domain, bind clathrin and are required for endocytosis.</title>
        <authorList>
            <person name="Wendland B."/>
            <person name="Steece K.E."/>
            <person name="Emr S.D."/>
        </authorList>
    </citation>
    <scope>FUNCTION</scope>
    <scope>SUBCELLULAR LOCATION</scope>
    <scope>DOMAIN CLATHRIN BINDING</scope>
</reference>
<reference key="4">
    <citation type="journal article" date="2001" name="Mol. Biol. Cell">
        <title>In vivo role for actin-regulating kinases in endocytosis and yeast epsin phosphorylation.</title>
        <authorList>
            <person name="Watson H.A."/>
            <person name="Cope M.J.T.V."/>
            <person name="Groen A.C."/>
            <person name="Drubin D.G."/>
            <person name="Wendland B."/>
        </authorList>
    </citation>
    <scope>FUNCTION</scope>
    <scope>INTERACTION WITH PAN1</scope>
    <scope>SUBCELLULAR LOCATION</scope>
    <scope>PHOSPHORYLATION AT THR-395 AND THR-415 BY PRK1</scope>
    <scope>MUTAGENESIS OF THR-395 AND THR-415</scope>
</reference>
<reference key="5">
    <citation type="journal article" date="2003" name="J. Biol. Chem.">
        <title>The yeast Epsin Ent1 is recruited to membranes through multiple independent interactions.</title>
        <authorList>
            <person name="Aguilar R.C."/>
            <person name="Watson H.A."/>
            <person name="Wendland B."/>
        </authorList>
    </citation>
    <scope>FUNCTION</scope>
    <scope>INTERACTION WITH EDE1</scope>
    <scope>SUBCELLULAR LOCATION</scope>
</reference>
<reference key="6">
    <citation type="journal article" date="2007" name="J. Proteome Res.">
        <title>Large-scale phosphorylation analysis of alpha-factor-arrested Saccharomyces cerevisiae.</title>
        <authorList>
            <person name="Li X."/>
            <person name="Gerber S.A."/>
            <person name="Rudner A.D."/>
            <person name="Beausoleil S.A."/>
            <person name="Haas W."/>
            <person name="Villen J."/>
            <person name="Elias J.E."/>
            <person name="Gygi S.P."/>
        </authorList>
    </citation>
    <scope>PHOSPHORYLATION [LARGE SCALE ANALYSIS] AT THR-366 AND THR-384</scope>
    <scope>IDENTIFICATION BY MASS SPECTROMETRY [LARGE SCALE ANALYSIS]</scope>
    <source>
        <strain>ADR376</strain>
    </source>
</reference>
<reference key="7">
    <citation type="journal article" date="2008" name="Mol. Cell. Proteomics">
        <title>A multidimensional chromatography technology for in-depth phosphoproteome analysis.</title>
        <authorList>
            <person name="Albuquerque C.P."/>
            <person name="Smolka M.B."/>
            <person name="Payne S.H."/>
            <person name="Bafna V."/>
            <person name="Eng J."/>
            <person name="Zhou H."/>
        </authorList>
    </citation>
    <scope>PHOSPHORYLATION [LARGE SCALE ANALYSIS] AT THR-160; SER-163; THR-180; THR-364 AND THR-366</scope>
    <scope>IDENTIFICATION BY MASS SPECTROMETRY [LARGE SCALE ANALYSIS]</scope>
</reference>
<reference key="8">
    <citation type="journal article" date="2009" name="Science">
        <title>Global analysis of Cdk1 substrate phosphorylation sites provides insights into evolution.</title>
        <authorList>
            <person name="Holt L.J."/>
            <person name="Tuch B.B."/>
            <person name="Villen J."/>
            <person name="Johnson A.D."/>
            <person name="Gygi S.P."/>
            <person name="Morgan D.O."/>
        </authorList>
    </citation>
    <scope>PHOSPHORYLATION [LARGE SCALE ANALYSIS] AT SER-163; SER-328; THR-364; THR-366; THR-386 AND THR-388</scope>
    <scope>IDENTIFICATION BY MASS SPECTROMETRY [LARGE SCALE ANALYSIS]</scope>
</reference>
<reference key="9">
    <citation type="journal article" date="2012" name="Proteomics">
        <title>Sites of ubiquitin attachment in Saccharomyces cerevisiae.</title>
        <authorList>
            <person name="Starita L.M."/>
            <person name="Lo R.S."/>
            <person name="Eng J.K."/>
            <person name="von Haller P.D."/>
            <person name="Fields S."/>
        </authorList>
    </citation>
    <scope>UBIQUITINATION [LARGE SCALE ANALYSIS] AT LYS-357</scope>
    <scope>IDENTIFICATION BY MASS SPECTROMETRY [LARGE SCALE ANALYSIS]</scope>
</reference>
<sequence length="454" mass="52352">MSKQFVRSAKNLVKGYSSTQVLVRNATSNDNHQVSKDSLIELAEKSYDSADFFEIMDMLDKRLNDKGKYWRHIAKALTVIDYLIRFGSENCVLWCRENLYIIKTLKEFRHEDDEGIDQGQIVRVKAKELTALLSDDERLNEERNMNIKGRNRKGRRRRGTGRSDENDDDLQRAISASRLTAEEDERRRKQDEDYETALQLSKEEEELKRLQDLQRMQQQQGQQQLQQPMYYDIFGNPITPEEYAQFQLQQQQQQQQQQLQQQPMYYDVFGNPITPEELAQFQQQQQLQEQQYLASMQQQQQAMSNNPFAKSEQSSSSPKRNQLVAASSPQQLQQQKQQEPLIQNRTGNQSMTDKYSKLNELLATGTGIDTFGNVGEARIPAQHTKTGTFINSQGTGYRQVSDDPNHNPFLNSQYTGLPSTSVVPTQTGYGFGNQSQQQSQNNGSNNRGYTLIDL</sequence>
<accession>Q12518</accession>
<accession>D6VRI8</accession>
<gene>
    <name type="primary">ENT1</name>
    <name type="ordered locus">YDL161W</name>
</gene>
<evidence type="ECO:0000255" key="1">
    <source>
        <dbReference type="PROSITE-ProRule" id="PRU00213"/>
    </source>
</evidence>
<evidence type="ECO:0000255" key="2">
    <source>
        <dbReference type="PROSITE-ProRule" id="PRU00243"/>
    </source>
</evidence>
<evidence type="ECO:0000256" key="3">
    <source>
        <dbReference type="SAM" id="MobiDB-lite"/>
    </source>
</evidence>
<evidence type="ECO:0000269" key="4">
    <source>
    </source>
</evidence>
<evidence type="ECO:0000269" key="5">
    <source>
    </source>
</evidence>
<evidence type="ECO:0000269" key="6">
    <source>
    </source>
</evidence>
<evidence type="ECO:0000305" key="7"/>
<evidence type="ECO:0007744" key="8">
    <source>
    </source>
</evidence>
<evidence type="ECO:0007744" key="9">
    <source>
    </source>
</evidence>
<evidence type="ECO:0007744" key="10">
    <source>
    </source>
</evidence>
<evidence type="ECO:0007744" key="11">
    <source>
    </source>
</evidence>
<evidence type="ECO:0007829" key="12">
    <source>
        <dbReference type="PDB" id="5LOZ"/>
    </source>
</evidence>
<evidence type="ECO:0007829" key="13">
    <source>
        <dbReference type="PDB" id="5ONF"/>
    </source>
</evidence>
<organism>
    <name type="scientific">Saccharomyces cerevisiae (strain ATCC 204508 / S288c)</name>
    <name type="common">Baker's yeast</name>
    <dbReference type="NCBI Taxonomy" id="559292"/>
    <lineage>
        <taxon>Eukaryota</taxon>
        <taxon>Fungi</taxon>
        <taxon>Dikarya</taxon>
        <taxon>Ascomycota</taxon>
        <taxon>Saccharomycotina</taxon>
        <taxon>Saccharomycetes</taxon>
        <taxon>Saccharomycetales</taxon>
        <taxon>Saccharomycetaceae</taxon>
        <taxon>Saccharomyces</taxon>
    </lineage>
</organism>
<proteinExistence type="evidence at protein level"/>
<comment type="function">
    <text evidence="4 5 6">Binds to membranes enriched in phosphatidylinositol 3,5-bisphosphate (PtdIns(3,5)P2) and phosphatidylinositol 4,5-bisphosphate (PtdIns(4,5)P2). Required for endocytosis and localization of actin. Negatively regulated via phosphorylation.</text>
</comment>
<comment type="subunit">
    <text evidence="5 6">Interacts with EDE1 and PAN1.</text>
</comment>
<comment type="interaction">
    <interactant intactId="EBI-31494">
        <id>Q12518</id>
    </interactant>
    <interactant intactId="EBI-15044">
        <id>P39083</id>
        <label>RGA1</label>
    </interactant>
    <organismsDiffer>false</organismsDiffer>
    <experiments>3</experiments>
</comment>
<comment type="interaction">
    <interactant intactId="EBI-31494">
        <id>Q12518</id>
    </interactant>
    <interactant intactId="EBI-15060">
        <id>Q06407</id>
        <label>RGA2</label>
    </interactant>
    <organismsDiffer>false</organismsDiffer>
    <experiments>6</experiments>
</comment>
<comment type="interaction">
    <interactant intactId="EBI-31494">
        <id>Q12518</id>
    </interactant>
    <interactant intactId="EBI-17323">
        <id>P33338</id>
        <label>SLA2</label>
    </interactant>
    <organismsDiffer>false</organismsDiffer>
    <experiments>3</experiments>
</comment>
<comment type="subcellular location">
    <subcellularLocation>
        <location>Cytoplasm</location>
    </subcellularLocation>
    <subcellularLocation>
        <location>Membrane</location>
        <topology>Peripheral membrane protein</topology>
    </subcellularLocation>
    <text>Localizes in a punctate pattern. Found in the actin cortical patches.</text>
</comment>
<comment type="similarity">
    <text evidence="7">Belongs to the epsin family.</text>
</comment>
<name>ENT1_YEAST</name>
<keyword id="KW-0002">3D-structure</keyword>
<keyword id="KW-0963">Cytoplasm</keyword>
<keyword id="KW-0254">Endocytosis</keyword>
<keyword id="KW-1017">Isopeptide bond</keyword>
<keyword id="KW-0446">Lipid-binding</keyword>
<keyword id="KW-0472">Membrane</keyword>
<keyword id="KW-0597">Phosphoprotein</keyword>
<keyword id="KW-1185">Reference proteome</keyword>
<keyword id="KW-0677">Repeat</keyword>
<keyword id="KW-0832">Ubl conjugation</keyword>
<feature type="chain" id="PRO_0000074524" description="Epsin-1">
    <location>
        <begin position="1"/>
        <end position="454"/>
    </location>
</feature>
<feature type="domain" description="ENTH" evidence="2">
    <location>
        <begin position="11"/>
        <end position="143"/>
    </location>
</feature>
<feature type="domain" description="UIM 1" evidence="1">
    <location>
        <begin position="165"/>
        <end position="184"/>
    </location>
</feature>
<feature type="domain" description="UIM 2" evidence="1">
    <location>
        <begin position="189"/>
        <end position="208"/>
    </location>
</feature>
<feature type="region of interest" description="Disordered" evidence="3">
    <location>
        <begin position="142"/>
        <end position="195"/>
    </location>
</feature>
<feature type="region of interest" description="Disordered" evidence="3">
    <location>
        <begin position="292"/>
        <end position="350"/>
    </location>
</feature>
<feature type="region of interest" description="Disordered" evidence="3">
    <location>
        <begin position="384"/>
        <end position="405"/>
    </location>
</feature>
<feature type="region of interest" description="Disordered" evidence="3">
    <location>
        <begin position="418"/>
        <end position="454"/>
    </location>
</feature>
<feature type="region of interest" description="Clathrin-binding">
    <location>
        <begin position="447"/>
        <end position="454"/>
    </location>
</feature>
<feature type="compositionally biased region" description="Basic residues" evidence="3">
    <location>
        <begin position="149"/>
        <end position="160"/>
    </location>
</feature>
<feature type="compositionally biased region" description="Basic and acidic residues" evidence="3">
    <location>
        <begin position="180"/>
        <end position="191"/>
    </location>
</feature>
<feature type="compositionally biased region" description="Low complexity" evidence="3">
    <location>
        <begin position="292"/>
        <end position="302"/>
    </location>
</feature>
<feature type="compositionally biased region" description="Polar residues" evidence="3">
    <location>
        <begin position="303"/>
        <end position="329"/>
    </location>
</feature>
<feature type="compositionally biased region" description="Polar residues" evidence="3">
    <location>
        <begin position="340"/>
        <end position="350"/>
    </location>
</feature>
<feature type="compositionally biased region" description="Polar residues" evidence="3">
    <location>
        <begin position="384"/>
        <end position="398"/>
    </location>
</feature>
<feature type="compositionally biased region" description="Polar residues" evidence="3">
    <location>
        <begin position="418"/>
        <end position="428"/>
    </location>
</feature>
<feature type="compositionally biased region" description="Low complexity" evidence="3">
    <location>
        <begin position="432"/>
        <end position="446"/>
    </location>
</feature>
<feature type="modified residue" description="Phosphothreonine" evidence="9">
    <location>
        <position position="160"/>
    </location>
</feature>
<feature type="modified residue" description="Phosphoserine" evidence="9 10">
    <location>
        <position position="163"/>
    </location>
</feature>
<feature type="modified residue" description="Phosphothreonine" evidence="9">
    <location>
        <position position="180"/>
    </location>
</feature>
<feature type="modified residue" description="Phosphoserine" evidence="10">
    <location>
        <position position="328"/>
    </location>
</feature>
<feature type="modified residue" description="Phosphothreonine" evidence="9 10">
    <location>
        <position position="364"/>
    </location>
</feature>
<feature type="modified residue" description="Phosphothreonine" evidence="8 9 10">
    <location>
        <position position="366"/>
    </location>
</feature>
<feature type="modified residue" description="Phosphothreonine" evidence="8">
    <location>
        <position position="384"/>
    </location>
</feature>
<feature type="modified residue" description="Phosphothreonine" evidence="10">
    <location>
        <position position="386"/>
    </location>
</feature>
<feature type="modified residue" description="Phosphothreonine" evidence="10">
    <location>
        <position position="388"/>
    </location>
</feature>
<feature type="modified residue" description="Phosphothreonine; by PRK1" evidence="5">
    <location>
        <position position="395"/>
    </location>
</feature>
<feature type="modified residue" description="Phosphothreonine; by PRK1" evidence="5">
    <location>
        <position position="415"/>
    </location>
</feature>
<feature type="cross-link" description="Glycyl lysine isopeptide (Lys-Gly) (interchain with G-Cter in ubiquitin)" evidence="11">
    <location>
        <position position="357"/>
    </location>
</feature>
<feature type="mutagenesis site" description="No phosphorylation." evidence="5">
    <original>T</original>
    <variation>A</variation>
    <variation>E</variation>
    <location>
        <position position="395"/>
    </location>
</feature>
<feature type="mutagenesis site" description="No phosphorylation." evidence="5">
    <original>T</original>
    <variation>A</variation>
    <variation>E</variation>
    <location>
        <position position="415"/>
    </location>
</feature>
<feature type="helix" evidence="13">
    <location>
        <begin position="6"/>
        <end position="14"/>
    </location>
</feature>
<feature type="helix" evidence="12">
    <location>
        <begin position="18"/>
        <end position="26"/>
    </location>
</feature>
<feature type="strand" evidence="13">
    <location>
        <begin position="29"/>
        <end position="31"/>
    </location>
</feature>
<feature type="helix" evidence="12">
    <location>
        <begin position="36"/>
        <end position="45"/>
    </location>
</feature>
<feature type="helix" evidence="12">
    <location>
        <begin position="49"/>
        <end position="63"/>
    </location>
</feature>
<feature type="helix" evidence="12">
    <location>
        <begin position="67"/>
        <end position="69"/>
    </location>
</feature>
<feature type="helix" evidence="12">
    <location>
        <begin position="70"/>
        <end position="86"/>
    </location>
</feature>
<feature type="helix" evidence="12">
    <location>
        <begin position="89"/>
        <end position="97"/>
    </location>
</feature>
<feature type="helix" evidence="12">
    <location>
        <begin position="99"/>
        <end position="104"/>
    </location>
</feature>
<feature type="helix" evidence="12">
    <location>
        <begin position="105"/>
        <end position="107"/>
    </location>
</feature>
<feature type="strand" evidence="13">
    <location>
        <begin position="113"/>
        <end position="115"/>
    </location>
</feature>
<feature type="helix" evidence="12">
    <location>
        <begin position="119"/>
        <end position="134"/>
    </location>
</feature>
<feature type="helix" evidence="12">
    <location>
        <begin position="136"/>
        <end position="146"/>
    </location>
</feature>